<organism>
    <name type="scientific">Dictyostelium discoideum</name>
    <name type="common">Social amoeba</name>
    <dbReference type="NCBI Taxonomy" id="44689"/>
    <lineage>
        <taxon>Eukaryota</taxon>
        <taxon>Amoebozoa</taxon>
        <taxon>Evosea</taxon>
        <taxon>Eumycetozoa</taxon>
        <taxon>Dictyostelia</taxon>
        <taxon>Dictyosteliales</taxon>
        <taxon>Dictyosteliaceae</taxon>
        <taxon>Dictyostelium</taxon>
    </lineage>
</organism>
<dbReference type="EC" id="2.7.11.-"/>
<dbReference type="EMBL" id="AAFI02000187">
    <property type="protein sequence ID" value="EAL61431.1"/>
    <property type="molecule type" value="Genomic_DNA"/>
</dbReference>
<dbReference type="RefSeq" id="XP_629868.1">
    <property type="nucleotide sequence ID" value="XM_629866.1"/>
</dbReference>
<dbReference type="SMR" id="Q54DK4"/>
<dbReference type="FunCoup" id="Q54DK4">
    <property type="interactions" value="380"/>
</dbReference>
<dbReference type="GlyGen" id="Q54DK4">
    <property type="glycosylation" value="2 sites"/>
</dbReference>
<dbReference type="PaxDb" id="44689-DDB0220120"/>
<dbReference type="EnsemblProtists" id="EAL61431">
    <property type="protein sequence ID" value="EAL61431"/>
    <property type="gene ID" value="DDB_G0292150"/>
</dbReference>
<dbReference type="GeneID" id="8628550"/>
<dbReference type="KEGG" id="ddi:DDB_G0292150"/>
<dbReference type="dictyBase" id="DDB_G0292150">
    <property type="gene designation" value="ak1"/>
</dbReference>
<dbReference type="VEuPathDB" id="AmoebaDB:DDB_G0292150"/>
<dbReference type="eggNOG" id="KOG0703">
    <property type="taxonomic scope" value="Eukaryota"/>
</dbReference>
<dbReference type="HOGENOM" id="CLU_257642_0_0_1"/>
<dbReference type="InParanoid" id="Q54DK4"/>
<dbReference type="OMA" id="NEDRMVY"/>
<dbReference type="PRO" id="PR:Q54DK4"/>
<dbReference type="Proteomes" id="UP000002195">
    <property type="component" value="Chromosome 6"/>
</dbReference>
<dbReference type="GO" id="GO:0005826">
    <property type="term" value="C:actomyosin contractile ring"/>
    <property type="evidence" value="ECO:0000318"/>
    <property type="project" value="GO_Central"/>
</dbReference>
<dbReference type="GO" id="GO:0005524">
    <property type="term" value="F:ATP binding"/>
    <property type="evidence" value="ECO:0000305"/>
    <property type="project" value="dictyBase"/>
</dbReference>
<dbReference type="GO" id="GO:0005096">
    <property type="term" value="F:GTPase activator activity"/>
    <property type="evidence" value="ECO:0007669"/>
    <property type="project" value="InterPro"/>
</dbReference>
<dbReference type="GO" id="GO:0016905">
    <property type="term" value="F:myosin heavy chain kinase activity"/>
    <property type="evidence" value="ECO:0000318"/>
    <property type="project" value="GO_Central"/>
</dbReference>
<dbReference type="GO" id="GO:0004674">
    <property type="term" value="F:protein serine/threonine kinase activity"/>
    <property type="evidence" value="ECO:0000250"/>
    <property type="project" value="dictyBase"/>
</dbReference>
<dbReference type="GO" id="GO:0008270">
    <property type="term" value="F:zinc ion binding"/>
    <property type="evidence" value="ECO:0007669"/>
    <property type="project" value="UniProtKB-KW"/>
</dbReference>
<dbReference type="GO" id="GO:0031037">
    <property type="term" value="P:myosin II filament disassembly"/>
    <property type="evidence" value="ECO:0000318"/>
    <property type="project" value="GO_Central"/>
</dbReference>
<dbReference type="GO" id="GO:0006468">
    <property type="term" value="P:protein phosphorylation"/>
    <property type="evidence" value="ECO:0000250"/>
    <property type="project" value="dictyBase"/>
</dbReference>
<dbReference type="CDD" id="cd16968">
    <property type="entry name" value="Alpha_kinase_MHCK_like"/>
    <property type="match status" value="1"/>
</dbReference>
<dbReference type="CDD" id="cd08838">
    <property type="entry name" value="ArfGap_AGFG"/>
    <property type="match status" value="1"/>
</dbReference>
<dbReference type="FunFam" id="3.20.200.10:FF:000002">
    <property type="entry name" value="Eukaryotic elongation factor 2 kinase"/>
    <property type="match status" value="1"/>
</dbReference>
<dbReference type="FunFam" id="3.30.200.20:FF:001042">
    <property type="entry name" value="Myosin heavy chain kinase B"/>
    <property type="match status" value="1"/>
</dbReference>
<dbReference type="Gene3D" id="1.10.220.150">
    <property type="entry name" value="Arf GTPase activating protein"/>
    <property type="match status" value="1"/>
</dbReference>
<dbReference type="Gene3D" id="3.20.200.10">
    <property type="entry name" value="MHCK/EF2 kinase"/>
    <property type="match status" value="1"/>
</dbReference>
<dbReference type="Gene3D" id="3.30.200.20">
    <property type="entry name" value="Phosphorylase Kinase, domain 1"/>
    <property type="match status" value="2"/>
</dbReference>
<dbReference type="InterPro" id="IPR004166">
    <property type="entry name" value="a-kinase_dom"/>
</dbReference>
<dbReference type="InterPro" id="IPR051852">
    <property type="entry name" value="Alpha-type_PK"/>
</dbReference>
<dbReference type="InterPro" id="IPR037278">
    <property type="entry name" value="ARFGAP/RecO"/>
</dbReference>
<dbReference type="InterPro" id="IPR001164">
    <property type="entry name" value="ArfGAP_dom"/>
</dbReference>
<dbReference type="InterPro" id="IPR038508">
    <property type="entry name" value="ArfGAP_dom_sf"/>
</dbReference>
<dbReference type="InterPro" id="IPR011009">
    <property type="entry name" value="Kinase-like_dom_sf"/>
</dbReference>
<dbReference type="PANTHER" id="PTHR45992:SF10">
    <property type="entry name" value="ALPHA-PROTEIN KINASE 1"/>
    <property type="match status" value="1"/>
</dbReference>
<dbReference type="PANTHER" id="PTHR45992">
    <property type="entry name" value="EUKARYOTIC ELONGATION FACTOR 2 KINASE-RELATED"/>
    <property type="match status" value="1"/>
</dbReference>
<dbReference type="Pfam" id="PF02816">
    <property type="entry name" value="Alpha_kinase"/>
    <property type="match status" value="1"/>
</dbReference>
<dbReference type="Pfam" id="PF01412">
    <property type="entry name" value="ArfGap"/>
    <property type="match status" value="1"/>
</dbReference>
<dbReference type="SMART" id="SM00811">
    <property type="entry name" value="Alpha_kinase"/>
    <property type="match status" value="1"/>
</dbReference>
<dbReference type="SMART" id="SM00105">
    <property type="entry name" value="ArfGap"/>
    <property type="match status" value="1"/>
</dbReference>
<dbReference type="SUPFAM" id="SSF57863">
    <property type="entry name" value="ArfGap/RecO-like zinc finger"/>
    <property type="match status" value="1"/>
</dbReference>
<dbReference type="SUPFAM" id="SSF56112">
    <property type="entry name" value="Protein kinase-like (PK-like)"/>
    <property type="match status" value="1"/>
</dbReference>
<dbReference type="PROSITE" id="PS51158">
    <property type="entry name" value="ALPHA_KINASE"/>
    <property type="match status" value="1"/>
</dbReference>
<dbReference type="PROSITE" id="PS50115">
    <property type="entry name" value="ARFGAP"/>
    <property type="match status" value="1"/>
</dbReference>
<protein>
    <recommendedName>
        <fullName>Alpha-protein kinase 1</fullName>
        <shortName>AK1</shortName>
        <ecNumber>2.7.11.-</ecNumber>
    </recommendedName>
</protein>
<gene>
    <name type="primary">ak1</name>
    <name type="ORF">DDB_G0292150</name>
</gene>
<comment type="similarity">
    <text evidence="5">Belongs to the protein kinase superfamily. Alpha-type protein kinase family. ALPK subfamily.</text>
</comment>
<reference key="1">
    <citation type="journal article" date="2005" name="Nature">
        <title>The genome of the social amoeba Dictyostelium discoideum.</title>
        <authorList>
            <person name="Eichinger L."/>
            <person name="Pachebat J.A."/>
            <person name="Gloeckner G."/>
            <person name="Rajandream M.A."/>
            <person name="Sucgang R."/>
            <person name="Berriman M."/>
            <person name="Song J."/>
            <person name="Olsen R."/>
            <person name="Szafranski K."/>
            <person name="Xu Q."/>
            <person name="Tunggal B."/>
            <person name="Kummerfeld S."/>
            <person name="Madera M."/>
            <person name="Konfortov B.A."/>
            <person name="Rivero F."/>
            <person name="Bankier A.T."/>
            <person name="Lehmann R."/>
            <person name="Hamlin N."/>
            <person name="Davies R."/>
            <person name="Gaudet P."/>
            <person name="Fey P."/>
            <person name="Pilcher K."/>
            <person name="Chen G."/>
            <person name="Saunders D."/>
            <person name="Sodergren E.J."/>
            <person name="Davis P."/>
            <person name="Kerhornou A."/>
            <person name="Nie X."/>
            <person name="Hall N."/>
            <person name="Anjard C."/>
            <person name="Hemphill L."/>
            <person name="Bason N."/>
            <person name="Farbrother P."/>
            <person name="Desany B."/>
            <person name="Just E."/>
            <person name="Morio T."/>
            <person name="Rost R."/>
            <person name="Churcher C.M."/>
            <person name="Cooper J."/>
            <person name="Haydock S."/>
            <person name="van Driessche N."/>
            <person name="Cronin A."/>
            <person name="Goodhead I."/>
            <person name="Muzny D.M."/>
            <person name="Mourier T."/>
            <person name="Pain A."/>
            <person name="Lu M."/>
            <person name="Harper D."/>
            <person name="Lindsay R."/>
            <person name="Hauser H."/>
            <person name="James K.D."/>
            <person name="Quiles M."/>
            <person name="Madan Babu M."/>
            <person name="Saito T."/>
            <person name="Buchrieser C."/>
            <person name="Wardroper A."/>
            <person name="Felder M."/>
            <person name="Thangavelu M."/>
            <person name="Johnson D."/>
            <person name="Knights A."/>
            <person name="Loulseged H."/>
            <person name="Mungall K.L."/>
            <person name="Oliver K."/>
            <person name="Price C."/>
            <person name="Quail M.A."/>
            <person name="Urushihara H."/>
            <person name="Hernandez J."/>
            <person name="Rabbinowitsch E."/>
            <person name="Steffen D."/>
            <person name="Sanders M."/>
            <person name="Ma J."/>
            <person name="Kohara Y."/>
            <person name="Sharp S."/>
            <person name="Simmonds M.N."/>
            <person name="Spiegler S."/>
            <person name="Tivey A."/>
            <person name="Sugano S."/>
            <person name="White B."/>
            <person name="Walker D."/>
            <person name="Woodward J.R."/>
            <person name="Winckler T."/>
            <person name="Tanaka Y."/>
            <person name="Shaulsky G."/>
            <person name="Schleicher M."/>
            <person name="Weinstock G.M."/>
            <person name="Rosenthal A."/>
            <person name="Cox E.C."/>
            <person name="Chisholm R.L."/>
            <person name="Gibbs R.A."/>
            <person name="Loomis W.F."/>
            <person name="Platzer M."/>
            <person name="Kay R.R."/>
            <person name="Williams J.G."/>
            <person name="Dear P.H."/>
            <person name="Noegel A.A."/>
            <person name="Barrell B.G."/>
            <person name="Kuspa A."/>
        </authorList>
    </citation>
    <scope>NUCLEOTIDE SEQUENCE [LARGE SCALE GENOMIC DNA]</scope>
    <source>
        <strain>AX4</strain>
    </source>
</reference>
<reference key="2">
    <citation type="journal article" date="2005" name="Mol. Biol. Cell">
        <title>Multiple myosin II heavy chain kinases: roles in filament assembly control and proper cytokinesis in Dictyostelium.</title>
        <authorList>
            <person name="Yumura S."/>
            <person name="Yoshida M."/>
            <person name="Betapudi V."/>
            <person name="Licate L.S."/>
            <person name="Iwadate Y."/>
            <person name="Nagasaki A."/>
            <person name="Uyeda T.Q.P."/>
            <person name="Egelhoff T.T."/>
        </authorList>
    </citation>
    <scope>NOMENCLATURE</scope>
</reference>
<accession>Q54DK4</accession>
<proteinExistence type="inferred from homology"/>
<sequence length="1352" mass="154085">MQPVPSDPNYGLLRSLFQDPNNQCCAECNSANVPYVCIKLGVFICPTCAHFLSTLGFKVRPIMGSSFSEEDISRLQSIGNLVSKQFWLARWTPMDIVMPPPEDPNLESFLRLKYIEKRWTSSLSTSDGFSSPNNNNTSNVNNINNNSNHNNNINNNNNNINNNNNNNINNNNNIINNFSNINNISNGMNNISLNNINNNNNNNNHYNGNDIGIPIVHKTQSQPQPQPQPQPQPQSQGFSPFNSPRSSPKPGRHHLIDDLISFNPTPVNNSNNNNNNNNNNNNGNNGNPLKFSGGIPQNNNNNNNNNTTTTTTTTNNNNKVPFDPFSPIKTFSESGEYQNTNGNQQLSGSGNSLIDILSHPTQSKSPSPSGTPHSLSPQHHSSDFKVHLIDIPTTQQQLQQQQLQLQQQLQQQLQQQQQQQQQQQQQQQSPISNPFTSNNNSNSEPLVSILDKHEDLHNHHHHQQQQHHKQQQQQQQQQQNGNNSPLAQFNQIQQQQINNNNPFVEEKQPHQHPHHLQHHRHHSTSSINHGSNGDLASISLTLLTPSPSPSPSFNYSGGVSSAPNNSLNNSCNGNNNLNNGMLNFSNLNIGGSTSSACSTNSSSNITIANNINSSNNINIINNQNNQNNNNNNNTNNVMISPSPSPNPFLPTPTSTNQNNHIITPIPVNPFTDNLQLNSNNIRQHPQQMYIQQQQQQQQQQQQQQQQQQQQQQQQQQQQLQMQQQQQQQMQQHYQQQQQQQQQQQQQQQQQQQQQQQQQQQQQQQQQQQQQQQQQQQQHINLSSSAPLQSVNHSPIPLQPQHSSSQYMNQQGYQVYPNVGNQPQSPQQIQPQPLQQQIFQQVQQQQPQIPQQSPQPLQSSTDEDQSVLEVLNLKKLFDMNMMDKEEFEHRRRQIIDNLTKTTSPIHQQPPQPPQPVLPVSAPAQVPQPHPPQQQNGPTVPQQQQQQQQQQQQQQQQQQQQQQQQQPIPQPSSSSPTPDARLTGTERVIRHRFDAKLGKWVQTATIVITEPTPFAEGAMRKAFRMKDLSAEGPSSQMVAKLFKDSNEDRMVYFKDVEMQTYSKEIAERFNLKSPPKKIDFVPAFVMELVERQGKPFCAVEYFIEGKYEKHNNNFGYKNDYDRNTPQAFSHFSYEDSGCQLIVVDIQGVGDVYTDPQIHSADGQGFGKGNLGIEGIKRFFSTHQCNPICHYLGLSSVNPKPANDESGTMPRPPSIGQSYVRPSAFPPNLQQSFSFNFPPLKDHHVLEQLNQQQQHLQQQQQQQQQQQQQQQQQQQQQQQQQQQQQQQQQQQQQQQQQNQQQNQQQNQQQQQQQQQQQQQQQNGHPPPQTPLPPTPQQKDKPKIEVFGDILRKLVS</sequence>
<name>AK1_DICDI</name>
<feature type="chain" id="PRO_0000363922" description="Alpha-protein kinase 1">
    <location>
        <begin position="1"/>
        <end position="1352"/>
    </location>
</feature>
<feature type="domain" description="Arf-GAP" evidence="2">
    <location>
        <begin position="7"/>
        <end position="127"/>
    </location>
</feature>
<feature type="domain" description="Alpha-type protein kinase" evidence="3">
    <location>
        <begin position="990"/>
        <end position="1194"/>
    </location>
</feature>
<feature type="zinc finger region" description="C4-type" evidence="2">
    <location>
        <begin position="25"/>
        <end position="48"/>
    </location>
</feature>
<feature type="region of interest" description="Disordered" evidence="4">
    <location>
        <begin position="123"/>
        <end position="164"/>
    </location>
</feature>
<feature type="region of interest" description="Disordered" evidence="4">
    <location>
        <begin position="219"/>
        <end position="380"/>
    </location>
</feature>
<feature type="region of interest" description="Disordered" evidence="4">
    <location>
        <begin position="424"/>
        <end position="445"/>
    </location>
</feature>
<feature type="region of interest" description="Disordered" evidence="4">
    <location>
        <begin position="457"/>
        <end position="484"/>
    </location>
</feature>
<feature type="region of interest" description="Disordered" evidence="4">
    <location>
        <begin position="503"/>
        <end position="560"/>
    </location>
</feature>
<feature type="region of interest" description="Disordered" evidence="4">
    <location>
        <begin position="619"/>
        <end position="658"/>
    </location>
</feature>
<feature type="region of interest" description="Disordered" evidence="4">
    <location>
        <begin position="786"/>
        <end position="863"/>
    </location>
</feature>
<feature type="region of interest" description="Disordered" evidence="4">
    <location>
        <begin position="901"/>
        <end position="979"/>
    </location>
</feature>
<feature type="region of interest" description="Disordered" evidence="4">
    <location>
        <begin position="1198"/>
        <end position="1234"/>
    </location>
</feature>
<feature type="region of interest" description="Disordered" evidence="4">
    <location>
        <begin position="1279"/>
        <end position="1352"/>
    </location>
</feature>
<feature type="coiled-coil region" evidence="1">
    <location>
        <begin position="393"/>
        <end position="429"/>
    </location>
</feature>
<feature type="coiled-coil region" evidence="1">
    <location>
        <begin position="689"/>
        <end position="781"/>
    </location>
</feature>
<feature type="coiled-coil region" evidence="1">
    <location>
        <begin position="1241"/>
        <end position="1320"/>
    </location>
</feature>
<feature type="compositionally biased region" description="Polar residues" evidence="4">
    <location>
        <begin position="237"/>
        <end position="246"/>
    </location>
</feature>
<feature type="compositionally biased region" description="Low complexity" evidence="4">
    <location>
        <begin position="268"/>
        <end position="287"/>
    </location>
</feature>
<feature type="compositionally biased region" description="Low complexity" evidence="4">
    <location>
        <begin position="298"/>
        <end position="318"/>
    </location>
</feature>
<feature type="compositionally biased region" description="Polar residues" evidence="4">
    <location>
        <begin position="329"/>
        <end position="352"/>
    </location>
</feature>
<feature type="compositionally biased region" description="Polar residues" evidence="4">
    <location>
        <begin position="359"/>
        <end position="379"/>
    </location>
</feature>
<feature type="compositionally biased region" description="Basic residues" evidence="4">
    <location>
        <begin position="458"/>
        <end position="470"/>
    </location>
</feature>
<feature type="compositionally biased region" description="Basic residues" evidence="4">
    <location>
        <begin position="510"/>
        <end position="523"/>
    </location>
</feature>
<feature type="compositionally biased region" description="Low complexity" evidence="4">
    <location>
        <begin position="619"/>
        <end position="636"/>
    </location>
</feature>
<feature type="compositionally biased region" description="Polar residues" evidence="4">
    <location>
        <begin position="799"/>
        <end position="812"/>
    </location>
</feature>
<feature type="compositionally biased region" description="Low complexity" evidence="4">
    <location>
        <begin position="821"/>
        <end position="859"/>
    </location>
</feature>
<feature type="compositionally biased region" description="Pro residues" evidence="4">
    <location>
        <begin position="906"/>
        <end position="915"/>
    </location>
</feature>
<feature type="compositionally biased region" description="Low complexity" evidence="4">
    <location>
        <begin position="931"/>
        <end position="965"/>
    </location>
</feature>
<feature type="compositionally biased region" description="Low complexity" evidence="4">
    <location>
        <begin position="1279"/>
        <end position="1319"/>
    </location>
</feature>
<feature type="compositionally biased region" description="Pro residues" evidence="4">
    <location>
        <begin position="1321"/>
        <end position="1332"/>
    </location>
</feature>
<feature type="compositionally biased region" description="Basic and acidic residues" evidence="4">
    <location>
        <begin position="1334"/>
        <end position="1352"/>
    </location>
</feature>
<feature type="binding site" evidence="1">
    <location>
        <begin position="1164"/>
        <end position="1169"/>
    </location>
    <ligand>
        <name>ATP</name>
        <dbReference type="ChEBI" id="CHEBI:30616"/>
    </ligand>
</feature>
<evidence type="ECO:0000255" key="1"/>
<evidence type="ECO:0000255" key="2">
    <source>
        <dbReference type="PROSITE-ProRule" id="PRU00288"/>
    </source>
</evidence>
<evidence type="ECO:0000255" key="3">
    <source>
        <dbReference type="PROSITE-ProRule" id="PRU00501"/>
    </source>
</evidence>
<evidence type="ECO:0000256" key="4">
    <source>
        <dbReference type="SAM" id="MobiDB-lite"/>
    </source>
</evidence>
<evidence type="ECO:0000305" key="5"/>
<keyword id="KW-0067">ATP-binding</keyword>
<keyword id="KW-0175">Coiled coil</keyword>
<keyword id="KW-0418">Kinase</keyword>
<keyword id="KW-0479">Metal-binding</keyword>
<keyword id="KW-0547">Nucleotide-binding</keyword>
<keyword id="KW-1185">Reference proteome</keyword>
<keyword id="KW-0723">Serine/threonine-protein kinase</keyword>
<keyword id="KW-0808">Transferase</keyword>
<keyword id="KW-0862">Zinc</keyword>
<keyword id="KW-0863">Zinc-finger</keyword>